<reference key="1">
    <citation type="submission" date="2006-12" db="EMBL/GenBank/DDBJ databases">
        <title>Complete sequence of Halorhodospira halophila SL1.</title>
        <authorList>
            <consortium name="US DOE Joint Genome Institute"/>
            <person name="Copeland A."/>
            <person name="Lucas S."/>
            <person name="Lapidus A."/>
            <person name="Barry K."/>
            <person name="Detter J.C."/>
            <person name="Glavina del Rio T."/>
            <person name="Hammon N."/>
            <person name="Israni S."/>
            <person name="Dalin E."/>
            <person name="Tice H."/>
            <person name="Pitluck S."/>
            <person name="Saunders E."/>
            <person name="Brettin T."/>
            <person name="Bruce D."/>
            <person name="Han C."/>
            <person name="Tapia R."/>
            <person name="Schmutz J."/>
            <person name="Larimer F."/>
            <person name="Land M."/>
            <person name="Hauser L."/>
            <person name="Kyrpides N."/>
            <person name="Mikhailova N."/>
            <person name="Hoff W."/>
            <person name="Richardson P."/>
        </authorList>
    </citation>
    <scope>NUCLEOTIDE SEQUENCE [LARGE SCALE GENOMIC DNA]</scope>
    <source>
        <strain>DSM 244 / SL1</strain>
    </source>
</reference>
<dbReference type="EC" id="3.4.21.88" evidence="1"/>
<dbReference type="EMBL" id="CP000544">
    <property type="protein sequence ID" value="ABM62505.1"/>
    <property type="molecule type" value="Genomic_DNA"/>
</dbReference>
<dbReference type="RefSeq" id="WP_011814527.1">
    <property type="nucleotide sequence ID" value="NC_008789.1"/>
</dbReference>
<dbReference type="SMR" id="A1WXU3"/>
<dbReference type="STRING" id="349124.Hhal_1741"/>
<dbReference type="MEROPS" id="S24.001"/>
<dbReference type="KEGG" id="hha:Hhal_1741"/>
<dbReference type="eggNOG" id="COG1974">
    <property type="taxonomic scope" value="Bacteria"/>
</dbReference>
<dbReference type="HOGENOM" id="CLU_066192_45_3_6"/>
<dbReference type="OrthoDB" id="9802364at2"/>
<dbReference type="Proteomes" id="UP000000647">
    <property type="component" value="Chromosome"/>
</dbReference>
<dbReference type="GO" id="GO:0003677">
    <property type="term" value="F:DNA binding"/>
    <property type="evidence" value="ECO:0007669"/>
    <property type="project" value="UniProtKB-UniRule"/>
</dbReference>
<dbReference type="GO" id="GO:0004252">
    <property type="term" value="F:serine-type endopeptidase activity"/>
    <property type="evidence" value="ECO:0007669"/>
    <property type="project" value="UniProtKB-UniRule"/>
</dbReference>
<dbReference type="GO" id="GO:0006281">
    <property type="term" value="P:DNA repair"/>
    <property type="evidence" value="ECO:0007669"/>
    <property type="project" value="UniProtKB-UniRule"/>
</dbReference>
<dbReference type="GO" id="GO:0006260">
    <property type="term" value="P:DNA replication"/>
    <property type="evidence" value="ECO:0007669"/>
    <property type="project" value="UniProtKB-UniRule"/>
</dbReference>
<dbReference type="GO" id="GO:0045892">
    <property type="term" value="P:negative regulation of DNA-templated transcription"/>
    <property type="evidence" value="ECO:0007669"/>
    <property type="project" value="UniProtKB-UniRule"/>
</dbReference>
<dbReference type="GO" id="GO:0006508">
    <property type="term" value="P:proteolysis"/>
    <property type="evidence" value="ECO:0007669"/>
    <property type="project" value="InterPro"/>
</dbReference>
<dbReference type="GO" id="GO:0009432">
    <property type="term" value="P:SOS response"/>
    <property type="evidence" value="ECO:0007669"/>
    <property type="project" value="UniProtKB-UniRule"/>
</dbReference>
<dbReference type="CDD" id="cd06529">
    <property type="entry name" value="S24_LexA-like"/>
    <property type="match status" value="1"/>
</dbReference>
<dbReference type="FunFam" id="1.10.10.10:FF:000009">
    <property type="entry name" value="LexA repressor"/>
    <property type="match status" value="1"/>
</dbReference>
<dbReference type="FunFam" id="2.10.109.10:FF:000001">
    <property type="entry name" value="LexA repressor"/>
    <property type="match status" value="1"/>
</dbReference>
<dbReference type="Gene3D" id="2.10.109.10">
    <property type="entry name" value="Umud Fragment, subunit A"/>
    <property type="match status" value="1"/>
</dbReference>
<dbReference type="Gene3D" id="1.10.10.10">
    <property type="entry name" value="Winged helix-like DNA-binding domain superfamily/Winged helix DNA-binding domain"/>
    <property type="match status" value="1"/>
</dbReference>
<dbReference type="HAMAP" id="MF_00015">
    <property type="entry name" value="LexA"/>
    <property type="match status" value="1"/>
</dbReference>
<dbReference type="InterPro" id="IPR006200">
    <property type="entry name" value="LexA"/>
</dbReference>
<dbReference type="InterPro" id="IPR039418">
    <property type="entry name" value="LexA-like"/>
</dbReference>
<dbReference type="InterPro" id="IPR036286">
    <property type="entry name" value="LexA/Signal_pep-like_sf"/>
</dbReference>
<dbReference type="InterPro" id="IPR006199">
    <property type="entry name" value="LexA_DNA-bd_dom"/>
</dbReference>
<dbReference type="InterPro" id="IPR050077">
    <property type="entry name" value="LexA_repressor"/>
</dbReference>
<dbReference type="InterPro" id="IPR006197">
    <property type="entry name" value="Peptidase_S24_LexA"/>
</dbReference>
<dbReference type="InterPro" id="IPR015927">
    <property type="entry name" value="Peptidase_S24_S26A/B/C"/>
</dbReference>
<dbReference type="InterPro" id="IPR036388">
    <property type="entry name" value="WH-like_DNA-bd_sf"/>
</dbReference>
<dbReference type="InterPro" id="IPR036390">
    <property type="entry name" value="WH_DNA-bd_sf"/>
</dbReference>
<dbReference type="NCBIfam" id="TIGR00498">
    <property type="entry name" value="lexA"/>
    <property type="match status" value="1"/>
</dbReference>
<dbReference type="PANTHER" id="PTHR33516">
    <property type="entry name" value="LEXA REPRESSOR"/>
    <property type="match status" value="1"/>
</dbReference>
<dbReference type="PANTHER" id="PTHR33516:SF2">
    <property type="entry name" value="LEXA REPRESSOR-RELATED"/>
    <property type="match status" value="1"/>
</dbReference>
<dbReference type="Pfam" id="PF01726">
    <property type="entry name" value="LexA_DNA_bind"/>
    <property type="match status" value="1"/>
</dbReference>
<dbReference type="Pfam" id="PF00717">
    <property type="entry name" value="Peptidase_S24"/>
    <property type="match status" value="1"/>
</dbReference>
<dbReference type="PRINTS" id="PR00726">
    <property type="entry name" value="LEXASERPTASE"/>
</dbReference>
<dbReference type="SUPFAM" id="SSF51306">
    <property type="entry name" value="LexA/Signal peptidase"/>
    <property type="match status" value="1"/>
</dbReference>
<dbReference type="SUPFAM" id="SSF46785">
    <property type="entry name" value="Winged helix' DNA-binding domain"/>
    <property type="match status" value="1"/>
</dbReference>
<protein>
    <recommendedName>
        <fullName evidence="1">LexA repressor</fullName>
        <ecNumber evidence="1">3.4.21.88</ecNumber>
    </recommendedName>
</protein>
<feature type="chain" id="PRO_1000001293" description="LexA repressor">
    <location>
        <begin position="1"/>
        <end position="226"/>
    </location>
</feature>
<feature type="DNA-binding region" description="H-T-H motif" evidence="1">
    <location>
        <begin position="28"/>
        <end position="48"/>
    </location>
</feature>
<feature type="active site" description="For autocatalytic cleavage activity" evidence="1">
    <location>
        <position position="133"/>
    </location>
</feature>
<feature type="active site" description="For autocatalytic cleavage activity" evidence="1">
    <location>
        <position position="170"/>
    </location>
</feature>
<feature type="site" description="Cleavage; by autolysis" evidence="1">
    <location>
        <begin position="98"/>
        <end position="99"/>
    </location>
</feature>
<sequence>MDTLTDRQREILELIRRSVAERGYPPTRAEICQSLGFRSPNAAESHLRALARKGAIEMRRGASRGIRLTDAFAGAAPEPSPATDDPNAGLPVVGRVAAGSPLLAEESIERYCQVDASLFSPPADYLLRVRGESMRDAGILDGDLLAVRRDTEARDGQIVVVRLHDEVTVKFLERCNGVLRLIPAHPDYPVIEVAADGQDAVLEGIGVGVLRSPLDPRGPEGNAASD</sequence>
<keyword id="KW-0068">Autocatalytic cleavage</keyword>
<keyword id="KW-0227">DNA damage</keyword>
<keyword id="KW-0234">DNA repair</keyword>
<keyword id="KW-0235">DNA replication</keyword>
<keyword id="KW-0238">DNA-binding</keyword>
<keyword id="KW-0378">Hydrolase</keyword>
<keyword id="KW-1185">Reference proteome</keyword>
<keyword id="KW-0678">Repressor</keyword>
<keyword id="KW-0742">SOS response</keyword>
<keyword id="KW-0804">Transcription</keyword>
<keyword id="KW-0805">Transcription regulation</keyword>
<organism>
    <name type="scientific">Halorhodospira halophila (strain DSM 244 / SL1)</name>
    <name type="common">Ectothiorhodospira halophila (strain DSM 244 / SL1)</name>
    <dbReference type="NCBI Taxonomy" id="349124"/>
    <lineage>
        <taxon>Bacteria</taxon>
        <taxon>Pseudomonadati</taxon>
        <taxon>Pseudomonadota</taxon>
        <taxon>Gammaproteobacteria</taxon>
        <taxon>Chromatiales</taxon>
        <taxon>Ectothiorhodospiraceae</taxon>
        <taxon>Halorhodospira</taxon>
    </lineage>
</organism>
<accession>A1WXU3</accession>
<comment type="function">
    <text evidence="1">Represses a number of genes involved in the response to DNA damage (SOS response), including recA and lexA. In the presence of single-stranded DNA, RecA interacts with LexA causing an autocatalytic cleavage which disrupts the DNA-binding part of LexA, leading to derepression of the SOS regulon and eventually DNA repair.</text>
</comment>
<comment type="catalytic activity">
    <reaction evidence="1">
        <text>Hydrolysis of Ala-|-Gly bond in repressor LexA.</text>
        <dbReference type="EC" id="3.4.21.88"/>
    </reaction>
</comment>
<comment type="subunit">
    <text evidence="1">Homodimer.</text>
</comment>
<comment type="similarity">
    <text evidence="1">Belongs to the peptidase S24 family.</text>
</comment>
<gene>
    <name evidence="1" type="primary">lexA</name>
    <name type="ordered locus">Hhal_1741</name>
</gene>
<name>LEXA_HALHL</name>
<proteinExistence type="inferred from homology"/>
<evidence type="ECO:0000255" key="1">
    <source>
        <dbReference type="HAMAP-Rule" id="MF_00015"/>
    </source>
</evidence>